<comment type="function">
    <text evidence="1">GTPase that plays an essential role in the late steps of ribosome biogenesis.</text>
</comment>
<comment type="subunit">
    <text evidence="1">Associates with the 50S ribosomal subunit.</text>
</comment>
<comment type="similarity">
    <text evidence="1">Belongs to the TRAFAC class TrmE-Era-EngA-EngB-Septin-like GTPase superfamily. EngA (Der) GTPase family.</text>
</comment>
<reference key="1">
    <citation type="journal article" date="2004" name="Nat. Genet.">
        <title>Evidence in the Legionella pneumophila genome for exploitation of host cell functions and high genome plasticity.</title>
        <authorList>
            <person name="Cazalet C."/>
            <person name="Rusniok C."/>
            <person name="Brueggemann H."/>
            <person name="Zidane N."/>
            <person name="Magnier A."/>
            <person name="Ma L."/>
            <person name="Tichit M."/>
            <person name="Jarraud S."/>
            <person name="Bouchier C."/>
            <person name="Vandenesch F."/>
            <person name="Kunst F."/>
            <person name="Etienne J."/>
            <person name="Glaser P."/>
            <person name="Buchrieser C."/>
        </authorList>
    </citation>
    <scope>NUCLEOTIDE SEQUENCE [LARGE SCALE GENOMIC DNA]</scope>
    <source>
        <strain>Paris</strain>
    </source>
</reference>
<feature type="chain" id="PRO_1000011654" description="GTPase Der">
    <location>
        <begin position="1"/>
        <end position="462"/>
    </location>
</feature>
<feature type="domain" description="EngA-type G 1">
    <location>
        <begin position="3"/>
        <end position="166"/>
    </location>
</feature>
<feature type="domain" description="EngA-type G 2">
    <location>
        <begin position="175"/>
        <end position="348"/>
    </location>
</feature>
<feature type="domain" description="KH-like" evidence="1">
    <location>
        <begin position="349"/>
        <end position="433"/>
    </location>
</feature>
<feature type="binding site" evidence="1">
    <location>
        <begin position="9"/>
        <end position="16"/>
    </location>
    <ligand>
        <name>GTP</name>
        <dbReference type="ChEBI" id="CHEBI:37565"/>
        <label>1</label>
    </ligand>
</feature>
<feature type="binding site" evidence="1">
    <location>
        <begin position="56"/>
        <end position="60"/>
    </location>
    <ligand>
        <name>GTP</name>
        <dbReference type="ChEBI" id="CHEBI:37565"/>
        <label>1</label>
    </ligand>
</feature>
<feature type="binding site" evidence="1">
    <location>
        <begin position="118"/>
        <end position="121"/>
    </location>
    <ligand>
        <name>GTP</name>
        <dbReference type="ChEBI" id="CHEBI:37565"/>
        <label>1</label>
    </ligand>
</feature>
<feature type="binding site" evidence="1">
    <location>
        <begin position="181"/>
        <end position="188"/>
    </location>
    <ligand>
        <name>GTP</name>
        <dbReference type="ChEBI" id="CHEBI:37565"/>
        <label>2</label>
    </ligand>
</feature>
<feature type="binding site" evidence="1">
    <location>
        <begin position="228"/>
        <end position="232"/>
    </location>
    <ligand>
        <name>GTP</name>
        <dbReference type="ChEBI" id="CHEBI:37565"/>
        <label>2</label>
    </ligand>
</feature>
<feature type="binding site" evidence="1">
    <location>
        <begin position="293"/>
        <end position="296"/>
    </location>
    <ligand>
        <name>GTP</name>
        <dbReference type="ChEBI" id="CHEBI:37565"/>
        <label>2</label>
    </ligand>
</feature>
<protein>
    <recommendedName>
        <fullName evidence="1">GTPase Der</fullName>
    </recommendedName>
    <alternativeName>
        <fullName evidence="1">GTP-binding protein EngA</fullName>
    </alternativeName>
</protein>
<dbReference type="EMBL" id="CR628336">
    <property type="protein sequence ID" value="CAH12649.1"/>
    <property type="molecule type" value="Genomic_DNA"/>
</dbReference>
<dbReference type="RefSeq" id="WP_011213821.1">
    <property type="nucleotide sequence ID" value="NC_006368.1"/>
</dbReference>
<dbReference type="SMR" id="Q5X522"/>
<dbReference type="KEGG" id="lpp:lpp1498"/>
<dbReference type="LegioList" id="lpp1498"/>
<dbReference type="HOGENOM" id="CLU_016077_6_2_6"/>
<dbReference type="GO" id="GO:0005525">
    <property type="term" value="F:GTP binding"/>
    <property type="evidence" value="ECO:0007669"/>
    <property type="project" value="UniProtKB-UniRule"/>
</dbReference>
<dbReference type="GO" id="GO:0043022">
    <property type="term" value="F:ribosome binding"/>
    <property type="evidence" value="ECO:0007669"/>
    <property type="project" value="TreeGrafter"/>
</dbReference>
<dbReference type="GO" id="GO:0042254">
    <property type="term" value="P:ribosome biogenesis"/>
    <property type="evidence" value="ECO:0007669"/>
    <property type="project" value="UniProtKB-KW"/>
</dbReference>
<dbReference type="CDD" id="cd01894">
    <property type="entry name" value="EngA1"/>
    <property type="match status" value="1"/>
</dbReference>
<dbReference type="CDD" id="cd01895">
    <property type="entry name" value="EngA2"/>
    <property type="match status" value="1"/>
</dbReference>
<dbReference type="FunFam" id="3.30.300.20:FF:000004">
    <property type="entry name" value="GTPase Der"/>
    <property type="match status" value="1"/>
</dbReference>
<dbReference type="FunFam" id="3.40.50.300:FF:000040">
    <property type="entry name" value="GTPase Der"/>
    <property type="match status" value="1"/>
</dbReference>
<dbReference type="FunFam" id="3.40.50.300:FF:000057">
    <property type="entry name" value="GTPase Der"/>
    <property type="match status" value="1"/>
</dbReference>
<dbReference type="Gene3D" id="3.30.300.20">
    <property type="match status" value="1"/>
</dbReference>
<dbReference type="Gene3D" id="3.40.50.300">
    <property type="entry name" value="P-loop containing nucleotide triphosphate hydrolases"/>
    <property type="match status" value="2"/>
</dbReference>
<dbReference type="HAMAP" id="MF_00195">
    <property type="entry name" value="GTPase_Der"/>
    <property type="match status" value="1"/>
</dbReference>
<dbReference type="InterPro" id="IPR031166">
    <property type="entry name" value="G_ENGA"/>
</dbReference>
<dbReference type="InterPro" id="IPR006073">
    <property type="entry name" value="GTP-bd"/>
</dbReference>
<dbReference type="InterPro" id="IPR016484">
    <property type="entry name" value="GTPase_Der"/>
</dbReference>
<dbReference type="InterPro" id="IPR032859">
    <property type="entry name" value="KH_dom-like"/>
</dbReference>
<dbReference type="InterPro" id="IPR015946">
    <property type="entry name" value="KH_dom-like_a/b"/>
</dbReference>
<dbReference type="InterPro" id="IPR027417">
    <property type="entry name" value="P-loop_NTPase"/>
</dbReference>
<dbReference type="InterPro" id="IPR005225">
    <property type="entry name" value="Small_GTP-bd"/>
</dbReference>
<dbReference type="NCBIfam" id="TIGR03594">
    <property type="entry name" value="GTPase_EngA"/>
    <property type="match status" value="1"/>
</dbReference>
<dbReference type="NCBIfam" id="TIGR00231">
    <property type="entry name" value="small_GTP"/>
    <property type="match status" value="2"/>
</dbReference>
<dbReference type="PANTHER" id="PTHR43834">
    <property type="entry name" value="GTPASE DER"/>
    <property type="match status" value="1"/>
</dbReference>
<dbReference type="PANTHER" id="PTHR43834:SF6">
    <property type="entry name" value="GTPASE DER"/>
    <property type="match status" value="1"/>
</dbReference>
<dbReference type="Pfam" id="PF14714">
    <property type="entry name" value="KH_dom-like"/>
    <property type="match status" value="1"/>
</dbReference>
<dbReference type="Pfam" id="PF01926">
    <property type="entry name" value="MMR_HSR1"/>
    <property type="match status" value="2"/>
</dbReference>
<dbReference type="PIRSF" id="PIRSF006485">
    <property type="entry name" value="GTP-binding_EngA"/>
    <property type="match status" value="1"/>
</dbReference>
<dbReference type="PRINTS" id="PR00326">
    <property type="entry name" value="GTP1OBG"/>
</dbReference>
<dbReference type="SUPFAM" id="SSF52540">
    <property type="entry name" value="P-loop containing nucleoside triphosphate hydrolases"/>
    <property type="match status" value="2"/>
</dbReference>
<dbReference type="PROSITE" id="PS51712">
    <property type="entry name" value="G_ENGA"/>
    <property type="match status" value="2"/>
</dbReference>
<organism>
    <name type="scientific">Legionella pneumophila (strain Paris)</name>
    <dbReference type="NCBI Taxonomy" id="297246"/>
    <lineage>
        <taxon>Bacteria</taxon>
        <taxon>Pseudomonadati</taxon>
        <taxon>Pseudomonadota</taxon>
        <taxon>Gammaproteobacteria</taxon>
        <taxon>Legionellales</taxon>
        <taxon>Legionellaceae</taxon>
        <taxon>Legionella</taxon>
    </lineage>
</organism>
<evidence type="ECO:0000255" key="1">
    <source>
        <dbReference type="HAMAP-Rule" id="MF_00195"/>
    </source>
</evidence>
<name>DER_LEGPA</name>
<gene>
    <name evidence="1" type="primary">der</name>
    <name type="synonym">engA</name>
    <name type="ordered locus">lpp1498</name>
</gene>
<accession>Q5X522</accession>
<proteinExistence type="inferred from homology"/>
<sequence length="462" mass="51310">MIPVIALVGRPNVGKSTLFNRITKTQDALVADFPGLTRDRQYGHAQHENKSFIIVDTGGIGVDDIEVDTLMSRQSQVALNEANVILFLVDGRSGLTGIDQQIAQALRKLNKKVHLVVNKTDGMNEDIACADFQSLGITDVHAISASHGGGISSLLEEILEPFTTETHEATDDKAIKIAFAGRPNVGKSTLINRILGEERVVVYDMPGTTRDSISIPFTREDKQYVLIDTAGVRRKSRIDEKIEKFSVIKTLQAIKEAHVCLLLLDANEGITDQDMNLLGFIIESGKALVIAVNKWDGLEEDHKEKIKSELSRRLHFANFAKIRFISALHGSGVGGLFKDINEAYHSAIQSFSTPKLTRLLQDISAKHTPPCINGRRIKLRYAHLGGHNPPVIVIHGNQLDALPESYKRYLNNEFIKHLGLVGTPLKIEFKGGQNPFANKKNKLSQRQVNKKKRLMRWAKSKK</sequence>
<keyword id="KW-0342">GTP-binding</keyword>
<keyword id="KW-0547">Nucleotide-binding</keyword>
<keyword id="KW-0677">Repeat</keyword>
<keyword id="KW-0690">Ribosome biogenesis</keyword>